<feature type="chain" id="PRO_0000399314" description="Adenylosuccinate synthetase">
    <location>
        <begin position="1"/>
        <end position="422"/>
    </location>
</feature>
<feature type="active site" description="Proton acceptor" evidence="2">
    <location>
        <position position="12"/>
    </location>
</feature>
<feature type="active site" description="Proton donor" evidence="2">
    <location>
        <position position="40"/>
    </location>
</feature>
<feature type="binding site" evidence="2">
    <location>
        <begin position="11"/>
        <end position="17"/>
    </location>
    <ligand>
        <name>GTP</name>
        <dbReference type="ChEBI" id="CHEBI:37565"/>
    </ligand>
</feature>
<feature type="binding site" description="in other chain" evidence="2">
    <location>
        <begin position="12"/>
        <end position="15"/>
    </location>
    <ligand>
        <name>IMP</name>
        <dbReference type="ChEBI" id="CHEBI:58053"/>
        <note>ligand shared between dimeric partners</note>
    </ligand>
</feature>
<feature type="binding site" evidence="2">
    <location>
        <position position="12"/>
    </location>
    <ligand>
        <name>Mg(2+)</name>
        <dbReference type="ChEBI" id="CHEBI:18420"/>
    </ligand>
</feature>
<feature type="binding site" description="in other chain" evidence="2">
    <location>
        <begin position="37"/>
        <end position="40"/>
    </location>
    <ligand>
        <name>IMP</name>
        <dbReference type="ChEBI" id="CHEBI:58053"/>
        <note>ligand shared between dimeric partners</note>
    </ligand>
</feature>
<feature type="binding site" evidence="2">
    <location>
        <begin position="39"/>
        <end position="41"/>
    </location>
    <ligand>
        <name>GTP</name>
        <dbReference type="ChEBI" id="CHEBI:37565"/>
    </ligand>
</feature>
<feature type="binding site" evidence="2">
    <location>
        <position position="39"/>
    </location>
    <ligand>
        <name>Mg(2+)</name>
        <dbReference type="ChEBI" id="CHEBI:18420"/>
    </ligand>
</feature>
<feature type="binding site" description="in other chain" evidence="2">
    <location>
        <position position="129"/>
    </location>
    <ligand>
        <name>IMP</name>
        <dbReference type="ChEBI" id="CHEBI:58053"/>
        <note>ligand shared between dimeric partners</note>
    </ligand>
</feature>
<feature type="binding site" evidence="2">
    <location>
        <position position="143"/>
    </location>
    <ligand>
        <name>IMP</name>
        <dbReference type="ChEBI" id="CHEBI:58053"/>
        <note>ligand shared between dimeric partners</note>
    </ligand>
</feature>
<feature type="binding site" description="in other chain" evidence="2">
    <location>
        <position position="219"/>
    </location>
    <ligand>
        <name>IMP</name>
        <dbReference type="ChEBI" id="CHEBI:58053"/>
        <note>ligand shared between dimeric partners</note>
    </ligand>
</feature>
<feature type="binding site" description="in other chain" evidence="2">
    <location>
        <position position="234"/>
    </location>
    <ligand>
        <name>IMP</name>
        <dbReference type="ChEBI" id="CHEBI:58053"/>
        <note>ligand shared between dimeric partners</note>
    </ligand>
</feature>
<feature type="binding site" evidence="2">
    <location>
        <begin position="294"/>
        <end position="300"/>
    </location>
    <ligand>
        <name>substrate</name>
    </ligand>
</feature>
<feature type="binding site" description="in other chain" evidence="2">
    <location>
        <position position="298"/>
    </location>
    <ligand>
        <name>IMP</name>
        <dbReference type="ChEBI" id="CHEBI:58053"/>
        <note>ligand shared between dimeric partners</note>
    </ligand>
</feature>
<feature type="binding site" evidence="2">
    <location>
        <position position="300"/>
    </location>
    <ligand>
        <name>GTP</name>
        <dbReference type="ChEBI" id="CHEBI:37565"/>
    </ligand>
</feature>
<feature type="binding site" evidence="2">
    <location>
        <begin position="326"/>
        <end position="328"/>
    </location>
    <ligand>
        <name>GTP</name>
        <dbReference type="ChEBI" id="CHEBI:37565"/>
    </ligand>
</feature>
<feature type="binding site" evidence="2">
    <location>
        <begin position="409"/>
        <end position="411"/>
    </location>
    <ligand>
        <name>GTP</name>
        <dbReference type="ChEBI" id="CHEBI:37565"/>
    </ligand>
</feature>
<reference key="1">
    <citation type="submission" date="2009-05" db="EMBL/GenBank/DDBJ databases">
        <title>The genome sequence of Ajellomyces capsulatus strain H143.</title>
        <authorList>
            <person name="Champion M."/>
            <person name="Cuomo C.A."/>
            <person name="Ma L.-J."/>
            <person name="Henn M.R."/>
            <person name="Sil A."/>
            <person name="Goldman B."/>
            <person name="Young S.K."/>
            <person name="Kodira C.D."/>
            <person name="Zeng Q."/>
            <person name="Koehrsen M."/>
            <person name="Alvarado L."/>
            <person name="Berlin A.M."/>
            <person name="Borenstein D."/>
            <person name="Chen Z."/>
            <person name="Engels R."/>
            <person name="Freedman E."/>
            <person name="Gellesch M."/>
            <person name="Goldberg J."/>
            <person name="Griggs A."/>
            <person name="Gujja S."/>
            <person name="Heiman D.I."/>
            <person name="Hepburn T.A."/>
            <person name="Howarth C."/>
            <person name="Jen D."/>
            <person name="Larson L."/>
            <person name="Lewis B."/>
            <person name="Mehta T."/>
            <person name="Park D."/>
            <person name="Pearson M."/>
            <person name="Roberts A."/>
            <person name="Saif S."/>
            <person name="Shea T.D."/>
            <person name="Shenoy N."/>
            <person name="Sisk P."/>
            <person name="Stolte C."/>
            <person name="Sykes S."/>
            <person name="Walk T."/>
            <person name="White J."/>
            <person name="Yandava C."/>
            <person name="Klein B."/>
            <person name="McEwen J.G."/>
            <person name="Puccia R."/>
            <person name="Goldman G.H."/>
            <person name="Felipe M.S."/>
            <person name="Nino-Vega G."/>
            <person name="San-Blas G."/>
            <person name="Taylor J.W."/>
            <person name="Mendoza L."/>
            <person name="Galagan J.E."/>
            <person name="Nusbaum C."/>
            <person name="Birren B.W."/>
        </authorList>
    </citation>
    <scope>NUCLEOTIDE SEQUENCE [LARGE SCALE GENOMIC DNA]</scope>
    <source>
        <strain>H143</strain>
    </source>
</reference>
<gene>
    <name type="ORF">HCDG_03993</name>
</gene>
<organism>
    <name type="scientific">Ajellomyces capsulatus (strain H143)</name>
    <name type="common">Darling's disease fungus</name>
    <name type="synonym">Histoplasma capsulatum</name>
    <dbReference type="NCBI Taxonomy" id="544712"/>
    <lineage>
        <taxon>Eukaryota</taxon>
        <taxon>Fungi</taxon>
        <taxon>Dikarya</taxon>
        <taxon>Ascomycota</taxon>
        <taxon>Pezizomycotina</taxon>
        <taxon>Eurotiomycetes</taxon>
        <taxon>Eurotiomycetidae</taxon>
        <taxon>Onygenales</taxon>
        <taxon>Ajellomycetaceae</taxon>
        <taxon>Histoplasma</taxon>
    </lineage>
</organism>
<proteinExistence type="inferred from homology"/>
<sequence length="422" mass="46391">MVTIVLGAQFGDEGKGKITDLLSQSATLCCRAAGGHNAGHTIVHDNITYDFHILPSGLIAPDCVNLIGTGTVVHLPSFFKELDALKAKGLKDAHERIFISDRAQVCFDLHSVVDGLEEASLAGKKVGTTGKGIGPCYSDKAARRGVRIGEVLEEGVVEDNLRKLEAGYRARFGELNYDLEEEIGRFNEYRTKLQPYVVDQMTFLAKYRSSPSILVEGANALMLDIDHGTYPYVTSSCTGVGGAIQGLTLNPTSIRSIIGVVKAYSTRVGSGPFPTEQNNAIGEKMQTIGREFGVTTGRRRRCGWLDMVMCRYSNSINHYTSINLTKLDILDDFDEIKVAVAYKLDGKRLESFPALPGVLDKVEAEYVTFPGWKSTTMGITRWEDLPANAQRYIQFIEREMGGVPIKWIGTGPARTHMIEREV</sequence>
<name>PURA_AJECH</name>
<evidence type="ECO:0000250" key="1"/>
<evidence type="ECO:0000255" key="2">
    <source>
        <dbReference type="HAMAP-Rule" id="MF_03125"/>
    </source>
</evidence>
<keyword id="KW-0963">Cytoplasm</keyword>
<keyword id="KW-0342">GTP-binding</keyword>
<keyword id="KW-0436">Ligase</keyword>
<keyword id="KW-0460">Magnesium</keyword>
<keyword id="KW-0479">Metal-binding</keyword>
<keyword id="KW-0547">Nucleotide-binding</keyword>
<keyword id="KW-0658">Purine biosynthesis</keyword>
<keyword id="KW-1185">Reference proteome</keyword>
<comment type="function">
    <text evidence="1">Plays an important role in the de novo pathway and in the salvage pathway of purine nucleotide biosynthesis. Catalyzes the first committed step in the biosynthesis of AMP from IMP (By similarity).</text>
</comment>
<comment type="catalytic activity">
    <reaction evidence="2">
        <text>IMP + L-aspartate + GTP = N(6)-(1,2-dicarboxyethyl)-AMP + GDP + phosphate + 2 H(+)</text>
        <dbReference type="Rhea" id="RHEA:15753"/>
        <dbReference type="ChEBI" id="CHEBI:15378"/>
        <dbReference type="ChEBI" id="CHEBI:29991"/>
        <dbReference type="ChEBI" id="CHEBI:37565"/>
        <dbReference type="ChEBI" id="CHEBI:43474"/>
        <dbReference type="ChEBI" id="CHEBI:57567"/>
        <dbReference type="ChEBI" id="CHEBI:58053"/>
        <dbReference type="ChEBI" id="CHEBI:58189"/>
        <dbReference type="EC" id="6.3.4.4"/>
    </reaction>
</comment>
<comment type="cofactor">
    <cofactor evidence="2">
        <name>Mg(2+)</name>
        <dbReference type="ChEBI" id="CHEBI:18420"/>
    </cofactor>
    <text evidence="2">Binds 1 Mg(2+) ion per subunit.</text>
</comment>
<comment type="pathway">
    <text evidence="2">Purine metabolism; AMP biosynthesis via de novo pathway; AMP from IMP: step 1/2.</text>
</comment>
<comment type="subunit">
    <text evidence="2">Homodimer.</text>
</comment>
<comment type="subcellular location">
    <subcellularLocation>
        <location evidence="2">Cytoplasm</location>
    </subcellularLocation>
</comment>
<comment type="similarity">
    <text evidence="2">Belongs to the adenylosuccinate synthetase family.</text>
</comment>
<dbReference type="EC" id="6.3.4.4" evidence="2"/>
<dbReference type="EMBL" id="GG692422">
    <property type="protein sequence ID" value="EER42534.1"/>
    <property type="molecule type" value="Genomic_DNA"/>
</dbReference>
<dbReference type="SMR" id="C6HBB1"/>
<dbReference type="STRING" id="544712.C6HBB1"/>
<dbReference type="VEuPathDB" id="FungiDB:HCDG_03993"/>
<dbReference type="eggNOG" id="KOG1355">
    <property type="taxonomic scope" value="Eukaryota"/>
</dbReference>
<dbReference type="HOGENOM" id="CLU_029848_3_2_1"/>
<dbReference type="OMA" id="FHHAKPI"/>
<dbReference type="OrthoDB" id="1065at299071"/>
<dbReference type="UniPathway" id="UPA00075">
    <property type="reaction ID" value="UER00335"/>
</dbReference>
<dbReference type="Proteomes" id="UP000002624">
    <property type="component" value="Unassembled WGS sequence"/>
</dbReference>
<dbReference type="GO" id="GO:0005737">
    <property type="term" value="C:cytoplasm"/>
    <property type="evidence" value="ECO:0007669"/>
    <property type="project" value="UniProtKB-SubCell"/>
</dbReference>
<dbReference type="GO" id="GO:0004019">
    <property type="term" value="F:adenylosuccinate synthase activity"/>
    <property type="evidence" value="ECO:0007669"/>
    <property type="project" value="UniProtKB-UniRule"/>
</dbReference>
<dbReference type="GO" id="GO:0005525">
    <property type="term" value="F:GTP binding"/>
    <property type="evidence" value="ECO:0007669"/>
    <property type="project" value="UniProtKB-UniRule"/>
</dbReference>
<dbReference type="GO" id="GO:0000287">
    <property type="term" value="F:magnesium ion binding"/>
    <property type="evidence" value="ECO:0007669"/>
    <property type="project" value="UniProtKB-UniRule"/>
</dbReference>
<dbReference type="GO" id="GO:0044208">
    <property type="term" value="P:'de novo' AMP biosynthetic process"/>
    <property type="evidence" value="ECO:0007669"/>
    <property type="project" value="UniProtKB-UniRule"/>
</dbReference>
<dbReference type="GO" id="GO:0046040">
    <property type="term" value="P:IMP metabolic process"/>
    <property type="evidence" value="ECO:0007669"/>
    <property type="project" value="TreeGrafter"/>
</dbReference>
<dbReference type="CDD" id="cd03108">
    <property type="entry name" value="AdSS"/>
    <property type="match status" value="1"/>
</dbReference>
<dbReference type="FunFam" id="1.10.300.10:FF:000001">
    <property type="entry name" value="Adenylosuccinate synthetase"/>
    <property type="match status" value="1"/>
</dbReference>
<dbReference type="FunFam" id="3.90.170.10:FF:000001">
    <property type="entry name" value="Adenylosuccinate synthetase"/>
    <property type="match status" value="1"/>
</dbReference>
<dbReference type="Gene3D" id="3.40.440.10">
    <property type="entry name" value="Adenylosuccinate Synthetase, subunit A, domain 1"/>
    <property type="match status" value="1"/>
</dbReference>
<dbReference type="Gene3D" id="1.10.300.10">
    <property type="entry name" value="Adenylosuccinate Synthetase, subunit A, domain 2"/>
    <property type="match status" value="1"/>
</dbReference>
<dbReference type="Gene3D" id="3.90.170.10">
    <property type="entry name" value="Adenylosuccinate Synthetase, subunit A, domain 3"/>
    <property type="match status" value="1"/>
</dbReference>
<dbReference type="HAMAP" id="MF_00011">
    <property type="entry name" value="Adenylosucc_synth"/>
    <property type="match status" value="1"/>
</dbReference>
<dbReference type="InterPro" id="IPR018220">
    <property type="entry name" value="Adenylosuccin_syn_GTP-bd"/>
</dbReference>
<dbReference type="InterPro" id="IPR033128">
    <property type="entry name" value="Adenylosuccin_syn_Lys_AS"/>
</dbReference>
<dbReference type="InterPro" id="IPR042109">
    <property type="entry name" value="Adenylosuccinate_synth_dom1"/>
</dbReference>
<dbReference type="InterPro" id="IPR042110">
    <property type="entry name" value="Adenylosuccinate_synth_dom2"/>
</dbReference>
<dbReference type="InterPro" id="IPR042111">
    <property type="entry name" value="Adenylosuccinate_synth_dom3"/>
</dbReference>
<dbReference type="InterPro" id="IPR001114">
    <property type="entry name" value="Adenylosuccinate_synthetase"/>
</dbReference>
<dbReference type="InterPro" id="IPR027417">
    <property type="entry name" value="P-loop_NTPase"/>
</dbReference>
<dbReference type="NCBIfam" id="NF002223">
    <property type="entry name" value="PRK01117.1"/>
    <property type="match status" value="1"/>
</dbReference>
<dbReference type="NCBIfam" id="TIGR00184">
    <property type="entry name" value="purA"/>
    <property type="match status" value="1"/>
</dbReference>
<dbReference type="PANTHER" id="PTHR11846">
    <property type="entry name" value="ADENYLOSUCCINATE SYNTHETASE"/>
    <property type="match status" value="1"/>
</dbReference>
<dbReference type="PANTHER" id="PTHR11846:SF0">
    <property type="entry name" value="ADENYLOSUCCINATE SYNTHETASE"/>
    <property type="match status" value="1"/>
</dbReference>
<dbReference type="Pfam" id="PF00709">
    <property type="entry name" value="Adenylsucc_synt"/>
    <property type="match status" value="1"/>
</dbReference>
<dbReference type="SMART" id="SM00788">
    <property type="entry name" value="Adenylsucc_synt"/>
    <property type="match status" value="1"/>
</dbReference>
<dbReference type="SUPFAM" id="SSF52540">
    <property type="entry name" value="P-loop containing nucleoside triphosphate hydrolases"/>
    <property type="match status" value="1"/>
</dbReference>
<dbReference type="PROSITE" id="PS01266">
    <property type="entry name" value="ADENYLOSUCCIN_SYN_1"/>
    <property type="match status" value="1"/>
</dbReference>
<dbReference type="PROSITE" id="PS00513">
    <property type="entry name" value="ADENYLOSUCCIN_SYN_2"/>
    <property type="match status" value="1"/>
</dbReference>
<accession>C6HBB1</accession>
<protein>
    <recommendedName>
        <fullName evidence="2">Adenylosuccinate synthetase</fullName>
        <shortName evidence="2">AMPSase</shortName>
        <shortName evidence="2">AdSS</shortName>
        <ecNumber evidence="2">6.3.4.4</ecNumber>
    </recommendedName>
    <alternativeName>
        <fullName evidence="2">IMP--aspartate ligase</fullName>
    </alternativeName>
</protein>